<organism>
    <name type="scientific">Drosophila melanogaster</name>
    <name type="common">Fruit fly</name>
    <dbReference type="NCBI Taxonomy" id="7227"/>
    <lineage>
        <taxon>Eukaryota</taxon>
        <taxon>Metazoa</taxon>
        <taxon>Ecdysozoa</taxon>
        <taxon>Arthropoda</taxon>
        <taxon>Hexapoda</taxon>
        <taxon>Insecta</taxon>
        <taxon>Pterygota</taxon>
        <taxon>Neoptera</taxon>
        <taxon>Endopterygota</taxon>
        <taxon>Diptera</taxon>
        <taxon>Brachycera</taxon>
        <taxon>Muscomorpha</taxon>
        <taxon>Ephydroidea</taxon>
        <taxon>Drosophilidae</taxon>
        <taxon>Drosophila</taxon>
        <taxon>Sophophora</taxon>
    </lineage>
</organism>
<evidence type="ECO:0000269" key="1">
    <source>
    </source>
</evidence>
<evidence type="ECO:0000269" key="2">
    <source>
    </source>
</evidence>
<evidence type="ECO:0000269" key="3">
    <source>
    </source>
</evidence>
<evidence type="ECO:0000269" key="4">
    <source>
    </source>
</evidence>
<evidence type="ECO:0000269" key="5">
    <source>
    </source>
</evidence>
<evidence type="ECO:0000269" key="6">
    <source>
    </source>
</evidence>
<evidence type="ECO:0000269" key="7">
    <source>
    </source>
</evidence>
<evidence type="ECO:0000269" key="8">
    <source>
    </source>
</evidence>
<evidence type="ECO:0000303" key="9">
    <source>
    </source>
</evidence>
<evidence type="ECO:0000303" key="10">
    <source>
    </source>
</evidence>
<evidence type="ECO:0000303" key="11">
    <source>
    </source>
</evidence>
<evidence type="ECO:0000305" key="12"/>
<evidence type="ECO:0000312" key="13">
    <source>
        <dbReference type="FlyBase" id="FBgn0261560"/>
    </source>
</evidence>
<evidence type="ECO:0007744" key="14">
    <source>
        <dbReference type="PDB" id="4UE8"/>
    </source>
</evidence>
<evidence type="ECO:0007829" key="15">
    <source>
        <dbReference type="PDB" id="4UE8"/>
    </source>
</evidence>
<sequence>MSASPTARQAITQALPMITRKVVISDPIQMPEVYSSTPGGTLYSTTPGGTKLIYERAFMKNLRGSPLSQTPPSNVPSCLLRGTPRTPFRKCVPVPTELIKQTKSLKIEDQEQFQLDL</sequence>
<feature type="chain" id="PRO_0000450889" description="Eukaryotic translation initiation factor 4E-binding protein">
    <location>
        <begin position="1"/>
        <end position="117"/>
    </location>
</feature>
<feature type="short sequence motif" description="YXXXXLphi motif; atypical" evidence="2">
    <location>
        <begin position="54"/>
        <end position="60"/>
    </location>
</feature>
<feature type="modified residue" description="Phosphothreonine" evidence="3">
    <location>
        <position position="37"/>
    </location>
</feature>
<feature type="modified residue" description="Phosphothreonine" evidence="3">
    <location>
        <position position="46"/>
    </location>
</feature>
<feature type="modified residue" description="Phosphoserine" evidence="5">
    <location>
        <position position="65"/>
    </location>
</feature>
<feature type="modified residue" description="Phosphothreonine" evidence="5">
    <location>
        <position position="70"/>
    </location>
</feature>
<feature type="mutagenesis site" description="Decreased phosphorylation in response." evidence="3">
    <original>T</original>
    <variation>A</variation>
    <location>
        <position position="37"/>
    </location>
</feature>
<feature type="mutagenesis site" description="Decreased phosphorylation in response." evidence="3">
    <original>T</original>
    <variation>A</variation>
    <location>
        <position position="46"/>
    </location>
</feature>
<feature type="mutagenesis site" description="Abolished interaction with eIF4E1." evidence="2">
    <original>Y</original>
    <variation>E</variation>
    <variation>F</variation>
    <location>
        <position position="54"/>
    </location>
</feature>
<feature type="mutagenesis site" description="In d4E-BP(LL) mutant; increased interaction with eIF4E1; expression of this mutant in wing-imaginal disks causes a reduction of wing size, caused by a decrease in cell size and number." evidence="2">
    <original>MK</original>
    <variation>LL</variation>
    <location>
        <begin position="59"/>
        <end position="60"/>
    </location>
</feature>
<feature type="mutagenesis site" description="Strongly decreased interaction with eIF4E1." evidence="2">
    <original>K</original>
    <variation>A</variation>
    <location>
        <position position="60"/>
    </location>
</feature>
<feature type="mutagenesis site" description="Phosphomimetic mutant; does not affect interaction with free eIF4E1." evidence="5">
    <original>SPLSQT</original>
    <variation>DPLSQD</variation>
    <location>
        <begin position="65"/>
        <end position="70"/>
    </location>
</feature>
<feature type="helix" evidence="15">
    <location>
        <begin position="56"/>
        <end position="60"/>
    </location>
</feature>
<feature type="turn" evidence="15">
    <location>
        <begin position="61"/>
        <end position="64"/>
    </location>
</feature>
<feature type="helix" evidence="15">
    <location>
        <begin position="66"/>
        <end position="68"/>
    </location>
</feature>
<feature type="helix" evidence="15">
    <location>
        <begin position="77"/>
        <end position="79"/>
    </location>
</feature>
<protein>
    <recommendedName>
        <fullName evidence="12">Eukaryotic translation initiation factor 4E-binding protein</fullName>
        <shortName evidence="10 11">4E-BP</shortName>
        <shortName evidence="10 11">d4E-BP</shortName>
        <shortName>eIF4E-binding protein</shortName>
    </recommendedName>
    <alternativeName>
        <fullName evidence="9">4E-binding protein Thor</fullName>
        <shortName evidence="9">dThor</shortName>
    </alternativeName>
</protein>
<comment type="function">
    <text evidence="1 2 4 5 6 7 8">Repressor of translation initiation that regulates eIF4E1 activity by preventing its assembly into the eIF4F complex (PubMed:11389445, PubMed:19804760, PubMed:25702871). Hypophosphorylated form competes with eIF4G1 and strongly binds to eIF4E1, leading to repress translation (PubMed:25702871). In contrast, hyperphosphorylated form dissociates from eIF4E1, allowing interaction between eIF4G1 and eIF4E1, leading to initiation of translation (PubMed:25702871). Acts as a regulator of various biological processes, such as innate immunity, cell growth or synaptic transmission (PubMed:10811906, PubMed:11389445, PubMed:27525480). Acts downstream of phosphoinositide-3-kinase (PI3K) to regulate cell growth (PubMed:11389445). Extends lifespan upon dietary restriction by regulating the mitochondrial translation (PubMed:19804760). Acts as a regulator of lifespan in response to cold by regulating the mitochondrial translation (PubMed:28827349). Acts as a negative regulator of presynaptic release of neurotransmitter in motor neurons: Thor expression is induced in response to insulin signaling, leading to prevent of translation of complexin (cpx), a protein known to regulate the exocytosis of synaptic vesicles (PubMed:27525480). Acts as a negative regulator of synaptic strength at the neuromuscular junction: Thor expression in response to acute fasting prevents translation, thereby suppressing retrograde synaptic enhancement (PubMed:27916456).</text>
</comment>
<comment type="subunit">
    <text evidence="2 3">Hypophosphorylated Thor/4E-BP competes with eIF4G1 to interact with eIF4E1; insulin stimulated Akt1 or Tor phosphorylation of Thor/4E-BP causes dissociation of the complex allowing eIF4G1 to bind and consequent initiation of translation.</text>
</comment>
<comment type="interaction">
    <interactant intactId="EBI-112695">
        <id>Q9XZ56</id>
    </interactant>
    <interactant intactId="EBI-198574">
        <id>P48598</id>
        <label>eIF4E1</label>
    </interactant>
    <organismsDiffer>false</organismsDiffer>
    <experiments>5</experiments>
</comment>
<comment type="tissue specificity">
    <text evidence="1">Widely expressed.</text>
</comment>
<comment type="developmental stage">
    <text evidence="1">Expressed during all developmental stages.</text>
</comment>
<comment type="induction">
    <text evidence="1 6 7">Up-regulated in response to bacterial infection (PubMed:10811906). Expression is induced by foxo: in neurons, foxo-dependent expression is activated in response to insulin signaling, while in muscle foxo-dependent expression is activated in response to fasting (PubMed:27525480, PubMed:27916456).</text>
</comment>
<comment type="domain">
    <text evidence="2">The YXXXXLphi motif mediates interaction with eIF4E1 (PubMed:11389445). Compared to other members of the family this YXXXXLphi is atypical and interaction with eIF4E1 is weaker (PubMed:11389445).</text>
</comment>
<comment type="PTM">
    <text evidence="2 3 5">Phosphorylation at Thr-37, Thr-46, Ser-65 and Thr-70, corresponding to the hyperphosphorylated form, impairs its ability to prevent the interaction between eIF4G1 and eIF4E1, without affecting its interaction with free eIF4E1 (PubMed:14645523, PubMed:25702871). Phosphorylated in rtesponse to insulin (PubMed:11389445). Phosphorylation at Thr-46 is regulated by Tor and constitutes the major phosphorylation event that regulates activity (PubMed:14645523).</text>
</comment>
<comment type="disruption phenotype">
    <text evidence="1">Impaired innate immune response.</text>
</comment>
<comment type="similarity">
    <text evidence="12">Belongs to the eIF4E-binding protein family.</text>
</comment>
<accession>Q9XZ56</accession>
<dbReference type="EMBL" id="AF244353">
    <property type="protein sequence ID" value="AAF82476.1"/>
    <property type="molecule type" value="Genomic_DNA"/>
</dbReference>
<dbReference type="EMBL" id="AE014134">
    <property type="protein sequence ID" value="AAF51100.1"/>
    <property type="molecule type" value="Genomic_DNA"/>
</dbReference>
<dbReference type="EMBL" id="AE014134">
    <property type="protein sequence ID" value="AHN54103.1"/>
    <property type="molecule type" value="Genomic_DNA"/>
</dbReference>
<dbReference type="EMBL" id="AF132557">
    <property type="protein sequence ID" value="AAD27856.1"/>
    <property type="molecule type" value="mRNA"/>
</dbReference>
<dbReference type="RefSeq" id="NP_001285588.1">
    <property type="nucleotide sequence ID" value="NM_001298659.1"/>
</dbReference>
<dbReference type="RefSeq" id="NP_477295.1">
    <property type="nucleotide sequence ID" value="NM_057947.4"/>
</dbReference>
<dbReference type="PDB" id="4UE8">
    <property type="method" value="X-ray"/>
    <property type="resolution" value="1.10 A"/>
    <property type="chains" value="B=50-83"/>
</dbReference>
<dbReference type="PDBsum" id="4UE8"/>
<dbReference type="SMR" id="Q9XZ56"/>
<dbReference type="FunCoup" id="Q9XZ56">
    <property type="interactions" value="79"/>
</dbReference>
<dbReference type="IntAct" id="Q9XZ56">
    <property type="interactions" value="228"/>
</dbReference>
<dbReference type="STRING" id="7227.FBpp0077213"/>
<dbReference type="GlyGen" id="Q9XZ56">
    <property type="glycosylation" value="1 site"/>
</dbReference>
<dbReference type="iPTMnet" id="Q9XZ56"/>
<dbReference type="PaxDb" id="7227-FBpp0077213"/>
<dbReference type="EnsemblMetazoa" id="FBtr0077524">
    <property type="protein sequence ID" value="FBpp0077213"/>
    <property type="gene ID" value="FBgn0261560"/>
</dbReference>
<dbReference type="EnsemblMetazoa" id="FBtr0345289">
    <property type="protein sequence ID" value="FBpp0311456"/>
    <property type="gene ID" value="FBgn0261560"/>
</dbReference>
<dbReference type="GeneID" id="33569"/>
<dbReference type="KEGG" id="dme:Dmel_CG8846"/>
<dbReference type="UCSC" id="CG8846-RA">
    <property type="organism name" value="d. melanogaster"/>
</dbReference>
<dbReference type="AGR" id="FB:FBgn0261560"/>
<dbReference type="CTD" id="33569"/>
<dbReference type="FlyBase" id="FBgn0261560">
    <property type="gene designation" value="Thor"/>
</dbReference>
<dbReference type="VEuPathDB" id="VectorBase:FBgn0261560"/>
<dbReference type="eggNOG" id="ENOG502S44S">
    <property type="taxonomic scope" value="Eukaryota"/>
</dbReference>
<dbReference type="GeneTree" id="ENSGT00940000171059"/>
<dbReference type="HOGENOM" id="CLU_111706_1_0_1"/>
<dbReference type="InParanoid" id="Q9XZ56"/>
<dbReference type="OMA" id="PMMTRKI"/>
<dbReference type="OrthoDB" id="19729at2759"/>
<dbReference type="PhylomeDB" id="Q9XZ56"/>
<dbReference type="Reactome" id="R-DME-110523">
    <property type="pathway name" value="TOR signaling pathway"/>
</dbReference>
<dbReference type="Reactome" id="R-DME-166208">
    <property type="pathway name" value="mTORC1-mediated signalling"/>
</dbReference>
<dbReference type="Reactome" id="R-DME-72662">
    <property type="pathway name" value="Activation of the mRNA upon binding of the cap-binding complex and eIFs, and subsequent binding to 43S"/>
</dbReference>
<dbReference type="SignaLink" id="Q9XZ56"/>
<dbReference type="BioGRID-ORCS" id="33569">
    <property type="hits" value="0 hits in 3 CRISPR screens"/>
</dbReference>
<dbReference type="ChiTaRS" id="Thor">
    <property type="organism name" value="fly"/>
</dbReference>
<dbReference type="EvolutionaryTrace" id="Q9XZ56"/>
<dbReference type="GenomeRNAi" id="33569"/>
<dbReference type="PRO" id="PR:Q9XZ56"/>
<dbReference type="Proteomes" id="UP000000803">
    <property type="component" value="Chromosome 2L"/>
</dbReference>
<dbReference type="Bgee" id="FBgn0261560">
    <property type="expression patterns" value="Expressed in muscle cell in body wall and 236 other cell types or tissues"/>
</dbReference>
<dbReference type="GO" id="GO:0005737">
    <property type="term" value="C:cytoplasm"/>
    <property type="evidence" value="ECO:0000318"/>
    <property type="project" value="GO_Central"/>
</dbReference>
<dbReference type="GO" id="GO:0005829">
    <property type="term" value="C:cytosol"/>
    <property type="evidence" value="ECO:0000314"/>
    <property type="project" value="FlyBase"/>
</dbReference>
<dbReference type="GO" id="GO:0098978">
    <property type="term" value="C:glutamatergic synapse"/>
    <property type="evidence" value="ECO:0000314"/>
    <property type="project" value="SynGO"/>
</dbReference>
<dbReference type="GO" id="GO:0031594">
    <property type="term" value="C:neuromuscular junction"/>
    <property type="evidence" value="ECO:0000314"/>
    <property type="project" value="SynGO"/>
</dbReference>
<dbReference type="GO" id="GO:0098793">
    <property type="term" value="C:presynapse"/>
    <property type="evidence" value="ECO:0007669"/>
    <property type="project" value="GOC"/>
</dbReference>
<dbReference type="GO" id="GO:0008190">
    <property type="term" value="F:eukaryotic initiation factor 4E binding"/>
    <property type="evidence" value="ECO:0000314"/>
    <property type="project" value="FlyBase"/>
</dbReference>
<dbReference type="GO" id="GO:0019731">
    <property type="term" value="P:antibacterial humoral response"/>
    <property type="evidence" value="ECO:0000315"/>
    <property type="project" value="FlyBase"/>
</dbReference>
<dbReference type="GO" id="GO:0032869">
    <property type="term" value="P:cellular response to insulin stimulus"/>
    <property type="evidence" value="ECO:0000314"/>
    <property type="project" value="FlyBase"/>
</dbReference>
<dbReference type="GO" id="GO:0034599">
    <property type="term" value="P:cellular response to oxidative stress"/>
    <property type="evidence" value="ECO:0000316"/>
    <property type="project" value="FlyBase"/>
</dbReference>
<dbReference type="GO" id="GO:0006955">
    <property type="term" value="P:immune response"/>
    <property type="evidence" value="ECO:0000315"/>
    <property type="project" value="FlyBase"/>
</dbReference>
<dbReference type="GO" id="GO:0045087">
    <property type="term" value="P:innate immune response"/>
    <property type="evidence" value="ECO:0007669"/>
    <property type="project" value="UniProtKB-KW"/>
</dbReference>
<dbReference type="GO" id="GO:0008286">
    <property type="term" value="P:insulin receptor signaling pathway"/>
    <property type="evidence" value="ECO:0000314"/>
    <property type="project" value="FlyBase"/>
</dbReference>
<dbReference type="GO" id="GO:0045792">
    <property type="term" value="P:negative regulation of cell size"/>
    <property type="evidence" value="ECO:0000315"/>
    <property type="project" value="FlyBase"/>
</dbReference>
<dbReference type="GO" id="GO:1905536">
    <property type="term" value="P:negative regulation of eukaryotic translation initiation factor 4F complex assembly"/>
    <property type="evidence" value="ECO:0000314"/>
    <property type="project" value="FlyBase"/>
</dbReference>
<dbReference type="GO" id="GO:0045947">
    <property type="term" value="P:negative regulation of translational initiation"/>
    <property type="evidence" value="ECO:0000314"/>
    <property type="project" value="FlyBase"/>
</dbReference>
<dbReference type="GO" id="GO:0001558">
    <property type="term" value="P:regulation of cell growth"/>
    <property type="evidence" value="ECO:0000315"/>
    <property type="project" value="FlyBase"/>
</dbReference>
<dbReference type="GO" id="GO:0099577">
    <property type="term" value="P:regulation of translation at presynapse, modulating synaptic transmission"/>
    <property type="evidence" value="ECO:0000314"/>
    <property type="project" value="SynGO"/>
</dbReference>
<dbReference type="GO" id="GO:0009617">
    <property type="term" value="P:response to bacterium"/>
    <property type="evidence" value="ECO:0000314"/>
    <property type="project" value="FlyBase"/>
</dbReference>
<dbReference type="GO" id="GO:0006979">
    <property type="term" value="P:response to oxidative stress"/>
    <property type="evidence" value="ECO:0000315"/>
    <property type="project" value="FlyBase"/>
</dbReference>
<dbReference type="GO" id="GO:0042594">
    <property type="term" value="P:response to starvation"/>
    <property type="evidence" value="ECO:0000315"/>
    <property type="project" value="FlyBase"/>
</dbReference>
<dbReference type="GO" id="GO:0006641">
    <property type="term" value="P:triglyceride metabolic process"/>
    <property type="evidence" value="ECO:0000315"/>
    <property type="project" value="FlyBase"/>
</dbReference>
<dbReference type="GO" id="GO:0048010">
    <property type="term" value="P:vascular endothelial growth factor receptor signaling pathway"/>
    <property type="evidence" value="ECO:0000314"/>
    <property type="project" value="FlyBase"/>
</dbReference>
<dbReference type="InterPro" id="IPR008606">
    <property type="entry name" value="EIF4EBP"/>
</dbReference>
<dbReference type="PANTHER" id="PTHR12669">
    <property type="entry name" value="EUKARYOTIC TRANSLATION INITIATION FACTOR 4E-BINDING PROTEIN"/>
    <property type="match status" value="1"/>
</dbReference>
<dbReference type="PANTHER" id="PTHR12669:SF12">
    <property type="entry name" value="EUKARYOTIC TRANSLATION INITIATION FACTOR 4E-BINDING PROTEIN"/>
    <property type="match status" value="1"/>
</dbReference>
<dbReference type="Pfam" id="PF05456">
    <property type="entry name" value="eIF_4EBP"/>
    <property type="match status" value="1"/>
</dbReference>
<reference key="1">
    <citation type="journal article" date="2000" name="Proc. Natl. Acad. Sci. U.S.A.">
        <title>Drosophila Thor participates in host immune defense and connects a translational regulator with innate immunity.</title>
        <authorList>
            <person name="Bernal A."/>
            <person name="Kimbrell D.A."/>
        </authorList>
    </citation>
    <scope>NUCLEOTIDE SEQUENCE [GENOMIC DNA]</scope>
    <scope>FUNCTION</scope>
    <scope>TISSUE SPECIFICITY</scope>
    <scope>DEVELOPMENTAL STAGE</scope>
    <scope>INDUCTION</scope>
    <scope>DISRUPTION PHENOTYPE</scope>
</reference>
<reference key="2">
    <citation type="journal article" date="2000" name="Science">
        <title>The genome sequence of Drosophila melanogaster.</title>
        <authorList>
            <person name="Adams M.D."/>
            <person name="Celniker S.E."/>
            <person name="Holt R.A."/>
            <person name="Evans C.A."/>
            <person name="Gocayne J.D."/>
            <person name="Amanatides P.G."/>
            <person name="Scherer S.E."/>
            <person name="Li P.W."/>
            <person name="Hoskins R.A."/>
            <person name="Galle R.F."/>
            <person name="George R.A."/>
            <person name="Lewis S.E."/>
            <person name="Richards S."/>
            <person name="Ashburner M."/>
            <person name="Henderson S.N."/>
            <person name="Sutton G.G."/>
            <person name="Wortman J.R."/>
            <person name="Yandell M.D."/>
            <person name="Zhang Q."/>
            <person name="Chen L.X."/>
            <person name="Brandon R.C."/>
            <person name="Rogers Y.-H.C."/>
            <person name="Blazej R.G."/>
            <person name="Champe M."/>
            <person name="Pfeiffer B.D."/>
            <person name="Wan K.H."/>
            <person name="Doyle C."/>
            <person name="Baxter E.G."/>
            <person name="Helt G."/>
            <person name="Nelson C.R."/>
            <person name="Miklos G.L.G."/>
            <person name="Abril J.F."/>
            <person name="Agbayani A."/>
            <person name="An H.-J."/>
            <person name="Andrews-Pfannkoch C."/>
            <person name="Baldwin D."/>
            <person name="Ballew R.M."/>
            <person name="Basu A."/>
            <person name="Baxendale J."/>
            <person name="Bayraktaroglu L."/>
            <person name="Beasley E.M."/>
            <person name="Beeson K.Y."/>
            <person name="Benos P.V."/>
            <person name="Berman B.P."/>
            <person name="Bhandari D."/>
            <person name="Bolshakov S."/>
            <person name="Borkova D."/>
            <person name="Botchan M.R."/>
            <person name="Bouck J."/>
            <person name="Brokstein P."/>
            <person name="Brottier P."/>
            <person name="Burtis K.C."/>
            <person name="Busam D.A."/>
            <person name="Butler H."/>
            <person name="Cadieu E."/>
            <person name="Center A."/>
            <person name="Chandra I."/>
            <person name="Cherry J.M."/>
            <person name="Cawley S."/>
            <person name="Dahlke C."/>
            <person name="Davenport L.B."/>
            <person name="Davies P."/>
            <person name="de Pablos B."/>
            <person name="Delcher A."/>
            <person name="Deng Z."/>
            <person name="Mays A.D."/>
            <person name="Dew I."/>
            <person name="Dietz S.M."/>
            <person name="Dodson K."/>
            <person name="Doup L.E."/>
            <person name="Downes M."/>
            <person name="Dugan-Rocha S."/>
            <person name="Dunkov B.C."/>
            <person name="Dunn P."/>
            <person name="Durbin K.J."/>
            <person name="Evangelista C.C."/>
            <person name="Ferraz C."/>
            <person name="Ferriera S."/>
            <person name="Fleischmann W."/>
            <person name="Fosler C."/>
            <person name="Gabrielian A.E."/>
            <person name="Garg N.S."/>
            <person name="Gelbart W.M."/>
            <person name="Glasser K."/>
            <person name="Glodek A."/>
            <person name="Gong F."/>
            <person name="Gorrell J.H."/>
            <person name="Gu Z."/>
            <person name="Guan P."/>
            <person name="Harris M."/>
            <person name="Harris N.L."/>
            <person name="Harvey D.A."/>
            <person name="Heiman T.J."/>
            <person name="Hernandez J.R."/>
            <person name="Houck J."/>
            <person name="Hostin D."/>
            <person name="Houston K.A."/>
            <person name="Howland T.J."/>
            <person name="Wei M.-H."/>
            <person name="Ibegwam C."/>
            <person name="Jalali M."/>
            <person name="Kalush F."/>
            <person name="Karpen G.H."/>
            <person name="Ke Z."/>
            <person name="Kennison J.A."/>
            <person name="Ketchum K.A."/>
            <person name="Kimmel B.E."/>
            <person name="Kodira C.D."/>
            <person name="Kraft C.L."/>
            <person name="Kravitz S."/>
            <person name="Kulp D."/>
            <person name="Lai Z."/>
            <person name="Lasko P."/>
            <person name="Lei Y."/>
            <person name="Levitsky A.A."/>
            <person name="Li J.H."/>
            <person name="Li Z."/>
            <person name="Liang Y."/>
            <person name="Lin X."/>
            <person name="Liu X."/>
            <person name="Mattei B."/>
            <person name="McIntosh T.C."/>
            <person name="McLeod M.P."/>
            <person name="McPherson D."/>
            <person name="Merkulov G."/>
            <person name="Milshina N.V."/>
            <person name="Mobarry C."/>
            <person name="Morris J."/>
            <person name="Moshrefi A."/>
            <person name="Mount S.M."/>
            <person name="Moy M."/>
            <person name="Murphy B."/>
            <person name="Murphy L."/>
            <person name="Muzny D.M."/>
            <person name="Nelson D.L."/>
            <person name="Nelson D.R."/>
            <person name="Nelson K.A."/>
            <person name="Nixon K."/>
            <person name="Nusskern D.R."/>
            <person name="Pacleb J.M."/>
            <person name="Palazzolo M."/>
            <person name="Pittman G.S."/>
            <person name="Pan S."/>
            <person name="Pollard J."/>
            <person name="Puri V."/>
            <person name="Reese M.G."/>
            <person name="Reinert K."/>
            <person name="Remington K."/>
            <person name="Saunders R.D.C."/>
            <person name="Scheeler F."/>
            <person name="Shen H."/>
            <person name="Shue B.C."/>
            <person name="Siden-Kiamos I."/>
            <person name="Simpson M."/>
            <person name="Skupski M.P."/>
            <person name="Smith T.J."/>
            <person name="Spier E."/>
            <person name="Spradling A.C."/>
            <person name="Stapleton M."/>
            <person name="Strong R."/>
            <person name="Sun E."/>
            <person name="Svirskas R."/>
            <person name="Tector C."/>
            <person name="Turner R."/>
            <person name="Venter E."/>
            <person name="Wang A.H."/>
            <person name="Wang X."/>
            <person name="Wang Z.-Y."/>
            <person name="Wassarman D.A."/>
            <person name="Weinstock G.M."/>
            <person name="Weissenbach J."/>
            <person name="Williams S.M."/>
            <person name="Woodage T."/>
            <person name="Worley K.C."/>
            <person name="Wu D."/>
            <person name="Yang S."/>
            <person name="Yao Q.A."/>
            <person name="Ye J."/>
            <person name="Yeh R.-F."/>
            <person name="Zaveri J.S."/>
            <person name="Zhan M."/>
            <person name="Zhang G."/>
            <person name="Zhao Q."/>
            <person name="Zheng L."/>
            <person name="Zheng X.H."/>
            <person name="Zhong F.N."/>
            <person name="Zhong W."/>
            <person name="Zhou X."/>
            <person name="Zhu S.C."/>
            <person name="Zhu X."/>
            <person name="Smith H.O."/>
            <person name="Gibbs R.A."/>
            <person name="Myers E.W."/>
            <person name="Rubin G.M."/>
            <person name="Venter J.C."/>
        </authorList>
    </citation>
    <scope>NUCLEOTIDE SEQUENCE [LARGE SCALE GENOMIC DNA]</scope>
    <source>
        <strain>Berkeley</strain>
    </source>
</reference>
<reference key="3">
    <citation type="journal article" date="2002" name="Genome Biol.">
        <title>Annotation of the Drosophila melanogaster euchromatic genome: a systematic review.</title>
        <authorList>
            <person name="Misra S."/>
            <person name="Crosby M.A."/>
            <person name="Mungall C.J."/>
            <person name="Matthews B.B."/>
            <person name="Campbell K.S."/>
            <person name="Hradecky P."/>
            <person name="Huang Y."/>
            <person name="Kaminker J.S."/>
            <person name="Millburn G.H."/>
            <person name="Prochnik S.E."/>
            <person name="Smith C.D."/>
            <person name="Tupy J.L."/>
            <person name="Whitfield E.J."/>
            <person name="Bayraktaroglu L."/>
            <person name="Berman B.P."/>
            <person name="Bettencourt B.R."/>
            <person name="Celniker S.E."/>
            <person name="de Grey A.D.N.J."/>
            <person name="Drysdale R.A."/>
            <person name="Harris N.L."/>
            <person name="Richter J."/>
            <person name="Russo S."/>
            <person name="Schroeder A.J."/>
            <person name="Shu S.Q."/>
            <person name="Stapleton M."/>
            <person name="Yamada C."/>
            <person name="Ashburner M."/>
            <person name="Gelbart W.M."/>
            <person name="Rubin G.M."/>
            <person name="Lewis S.E."/>
        </authorList>
    </citation>
    <scope>GENOME REANNOTATION</scope>
    <source>
        <strain>Berkeley</strain>
    </source>
</reference>
<reference key="4">
    <citation type="journal article" date="2002" name="Genome Biol.">
        <title>A Drosophila full-length cDNA resource.</title>
        <authorList>
            <person name="Stapleton M."/>
            <person name="Carlson J.W."/>
            <person name="Brokstein P."/>
            <person name="Yu C."/>
            <person name="Champe M."/>
            <person name="George R.A."/>
            <person name="Guarin H."/>
            <person name="Kronmiller B."/>
            <person name="Pacleb J.M."/>
            <person name="Park S."/>
            <person name="Wan K.H."/>
            <person name="Rubin G.M."/>
            <person name="Celniker S.E."/>
        </authorList>
    </citation>
    <scope>NUCLEOTIDE SEQUENCE [LARGE SCALE MRNA]</scope>
    <source>
        <strain>Berkeley</strain>
        <tissue>Head</tissue>
    </source>
</reference>
<reference key="5">
    <citation type="journal article" date="2001" name="Nat. Cell Biol.">
        <title>The translational inhibitor 4E-BP is an effector of PI(3)K/Akt signalling and cell growth in Drosophila.</title>
        <authorList>
            <person name="Miron M."/>
            <person name="Verdu J."/>
            <person name="Lachance P.E."/>
            <person name="Birnbaum M.J."/>
            <person name="Lasko P.F."/>
            <person name="Sonenberg N."/>
        </authorList>
    </citation>
    <scope>FUNCTION</scope>
    <scope>INTERACTION WITH EIF4E1</scope>
    <scope>PHOSPHORYLATION</scope>
    <scope>DOMAIN</scope>
    <scope>MUTAGENESIS OF TYR-54; 59-MET-LYS-60 AND LYS-60</scope>
</reference>
<reference key="6">
    <citation type="journal article" date="2003" name="Mol. Cell. Biol.">
        <title>Signaling from Akt to FRAP/TOR targets both 4E-BP and S6K in Drosophila melanogaster.</title>
        <authorList>
            <person name="Miron M."/>
            <person name="Lasko P."/>
            <person name="Sonenberg N."/>
        </authorList>
    </citation>
    <scope>INTERACTION WITH EIF4E1</scope>
    <scope>PHOSPHORYLATION AT THR-37 AND THR-46</scope>
    <scope>MUTAGENESIS OF THR-37 AND THR-46</scope>
</reference>
<reference key="7">
    <citation type="journal article" date="2009" name="Cell">
        <title>4E-BP extends lifespan upon dietary restriction by enhancing mitochondrial activity in Drosophila.</title>
        <authorList>
            <person name="Zid B.M."/>
            <person name="Rogers A.N."/>
            <person name="Katewa S.D."/>
            <person name="Vargas M.A."/>
            <person name="Kolipinski M.C."/>
            <person name="Lu T.A."/>
            <person name="Benzer S."/>
            <person name="Kapahi P."/>
        </authorList>
    </citation>
    <scope>FUNCTION</scope>
</reference>
<reference key="8">
    <citation type="journal article" date="2016" name="Elife">
        <title>Insulin signaling controls neurotransmission via the 4eBP-dependent modification of the exocytotic machinery.</title>
        <authorList>
            <person name="Mahoney R.E."/>
            <person name="Azpurua J."/>
            <person name="Eaton B.A."/>
        </authorList>
    </citation>
    <scope>FUNCTION</scope>
    <scope>INDUCTION</scope>
</reference>
<reference key="9">
    <citation type="journal article" date="2016" name="Neuron">
        <title>Acute fasting regulates retrograde synaptic enhancement through a 4E-BP-dependent mechanism.</title>
        <authorList>
            <person name="Kauwe G."/>
            <person name="Tsurudome K."/>
            <person name="Penney J."/>
            <person name="Mori M."/>
            <person name="Gray L."/>
            <person name="Calderon M.R."/>
            <person name="Elazouzzi F."/>
            <person name="Chicoine N."/>
            <person name="Sonenberg N."/>
            <person name="Haghighi A.P."/>
        </authorList>
    </citation>
    <scope>FUNCTION</scope>
    <scope>INDUCTION</scope>
</reference>
<reference key="10">
    <citation type="journal article" date="2017" name="Proc. Natl. Acad. Sci. U.S.A.">
        <title>The 4E-BP growth pathway regulates the effect of ambient temperature on Drosophila metabolism and lifespan.</title>
        <authorList>
            <person name="Carvalho G.B."/>
            <person name="Drago I."/>
            <person name="Hoxha S."/>
            <person name="Yamada R."/>
            <person name="Mahneva O."/>
            <person name="Bruce K.D."/>
            <person name="Soto Obando A."/>
            <person name="Conti B."/>
            <person name="Ja W.W."/>
        </authorList>
    </citation>
    <scope>FUNCTION</scope>
</reference>
<reference evidence="14" key="11">
    <citation type="journal article" date="2015" name="Mol. Cell">
        <title>Molecular architecture of 4E-BP translational inhibitors bound to eIF4E.</title>
        <authorList>
            <person name="Peter D."/>
            <person name="Igreja C."/>
            <person name="Weber R."/>
            <person name="Wohlbold L."/>
            <person name="Weiler C."/>
            <person name="Ebertsch L."/>
            <person name="Weichenrieder O."/>
            <person name="Izaurralde E."/>
        </authorList>
    </citation>
    <scope>X-RAY CRYSTALLOGRAPHY (1.10 ANGSTROMS) OF 50-83 IN COMPLEX WITH EIF4E1</scope>
    <scope>FUNCTION</scope>
    <scope>INTERACTION WITH EIF4E1</scope>
    <scope>PHOSPHORYLATION AT SER-65 AND THR-70</scope>
    <scope>MUTAGENESIS OF 65-SER--THR-70</scope>
</reference>
<gene>
    <name evidence="9 13" type="primary">Thor</name>
    <name evidence="13" type="ORF">CG8846</name>
</gene>
<keyword id="KW-0002">3D-structure</keyword>
<keyword id="KW-0391">Immunity</keyword>
<keyword id="KW-0399">Innate immunity</keyword>
<keyword id="KW-0597">Phosphoprotein</keyword>
<keyword id="KW-0652">Protein synthesis inhibitor</keyword>
<keyword id="KW-1185">Reference proteome</keyword>
<keyword id="KW-0810">Translation regulation</keyword>
<name>4EBP_DROME</name>
<proteinExistence type="evidence at protein level"/>